<keyword id="KW-1015">Disulfide bond</keyword>
<keyword id="KW-0560">Oxidoreductase</keyword>
<keyword id="KW-0574">Periplasm</keyword>
<keyword id="KW-0676">Redox-active center</keyword>
<keyword id="KW-1185">Reference proteome</keyword>
<keyword id="KW-0732">Signal</keyword>
<reference key="1">
    <citation type="journal article" date="1998" name="Nature">
        <title>The genome sequence of Rickettsia prowazekii and the origin of mitochondria.</title>
        <authorList>
            <person name="Andersson S.G.E."/>
            <person name="Zomorodipour A."/>
            <person name="Andersson J.O."/>
            <person name="Sicheritz-Ponten T."/>
            <person name="Alsmark U.C.M."/>
            <person name="Podowski R.M."/>
            <person name="Naeslund A.K."/>
            <person name="Eriksson A.-S."/>
            <person name="Winkler H.H."/>
            <person name="Kurland C.G."/>
        </authorList>
    </citation>
    <scope>NUCLEOTIDE SEQUENCE [LARGE SCALE GENOMIC DNA]</scope>
    <source>
        <strain>Madrid E</strain>
    </source>
</reference>
<feature type="signal peptide" evidence="2">
    <location>
        <begin position="1"/>
        <end position="21"/>
    </location>
</feature>
<feature type="chain" id="PRO_0000259991" description="Putative protein-disulfide oxidoreductase RP025">
    <location>
        <begin position="22"/>
        <end position="272"/>
    </location>
</feature>
<feature type="domain" description="Thioredoxin" evidence="3">
    <location>
        <begin position="74"/>
        <end position="263"/>
    </location>
</feature>
<feature type="disulfide bond" description="Redox-active" evidence="3">
    <location>
        <begin position="116"/>
        <end position="119"/>
    </location>
</feature>
<organism>
    <name type="scientific">Rickettsia prowazekii (strain Madrid E)</name>
    <dbReference type="NCBI Taxonomy" id="272947"/>
    <lineage>
        <taxon>Bacteria</taxon>
        <taxon>Pseudomonadati</taxon>
        <taxon>Pseudomonadota</taxon>
        <taxon>Alphaproteobacteria</taxon>
        <taxon>Rickettsiales</taxon>
        <taxon>Rickettsiaceae</taxon>
        <taxon>Rickettsieae</taxon>
        <taxon>Rickettsia</taxon>
        <taxon>typhus group</taxon>
    </lineage>
</organism>
<accession>Q9ZEB9</accession>
<protein>
    <recommendedName>
        <fullName>Putative protein-disulfide oxidoreductase RP025</fullName>
        <ecNumber>1.8.-.-</ecNumber>
    </recommendedName>
</protein>
<comment type="function">
    <text evidence="1">May be required for disulfide bond formation in some proteins.</text>
</comment>
<comment type="subcellular location">
    <subcellularLocation>
        <location evidence="1">Periplasm</location>
    </subcellularLocation>
</comment>
<comment type="similarity">
    <text evidence="4">Belongs to the thioredoxin family. DsbA subfamily.</text>
</comment>
<name>DSB_RICPR</name>
<sequence>MRNIFIVLIFLFLSNCSEVKAQDKKYEGKQIIVQEPLQNNKTPQETNQESINSATKSVVHNNDNNQTEEVLIHDSREQKKPEIRPTKVTFKIDDNDMVLGNKKSNVIVVEYFSPTCPHCAYYHQTIFPELKKKYIDTNKIAYVIREFIATKQDLDAAILARCKGDINSFIQFHNIILQQQDKWAYSNKYRELLTDIGQLGGIPPEEYKQCLNSDKITATLIANTNLVAKAPKFIGTPSFFVNGVQTENYSIDNISKAVDKALDDETKKQINF</sequence>
<evidence type="ECO:0000250" key="1"/>
<evidence type="ECO:0000255" key="2"/>
<evidence type="ECO:0000255" key="3">
    <source>
        <dbReference type="PROSITE-ProRule" id="PRU00691"/>
    </source>
</evidence>
<evidence type="ECO:0000305" key="4"/>
<dbReference type="EC" id="1.8.-.-"/>
<dbReference type="EMBL" id="AJ235270">
    <property type="protein sequence ID" value="CAA14496.1"/>
    <property type="molecule type" value="Genomic_DNA"/>
</dbReference>
<dbReference type="PIR" id="A71710">
    <property type="entry name" value="A71710"/>
</dbReference>
<dbReference type="RefSeq" id="NP_220419.1">
    <property type="nucleotide sequence ID" value="NC_000963.1"/>
</dbReference>
<dbReference type="RefSeq" id="WP_004596665.1">
    <property type="nucleotide sequence ID" value="NC_000963.1"/>
</dbReference>
<dbReference type="SMR" id="Q9ZEB9"/>
<dbReference type="STRING" id="272947.gene:17555108"/>
<dbReference type="EnsemblBacteria" id="CAA14496">
    <property type="protein sequence ID" value="CAA14496"/>
    <property type="gene ID" value="CAA14496"/>
</dbReference>
<dbReference type="KEGG" id="rpr:RP025"/>
<dbReference type="PATRIC" id="fig|272947.5.peg.25"/>
<dbReference type="eggNOG" id="COG1651">
    <property type="taxonomic scope" value="Bacteria"/>
</dbReference>
<dbReference type="HOGENOM" id="CLU_1022630_0_0_5"/>
<dbReference type="OrthoDB" id="8478320at2"/>
<dbReference type="Proteomes" id="UP000002480">
    <property type="component" value="Chromosome"/>
</dbReference>
<dbReference type="GO" id="GO:0042597">
    <property type="term" value="C:periplasmic space"/>
    <property type="evidence" value="ECO:0007669"/>
    <property type="project" value="UniProtKB-SubCell"/>
</dbReference>
<dbReference type="GO" id="GO:0015036">
    <property type="term" value="F:disulfide oxidoreductase activity"/>
    <property type="evidence" value="ECO:0007669"/>
    <property type="project" value="UniProtKB-ARBA"/>
</dbReference>
<dbReference type="Gene3D" id="3.40.30.10">
    <property type="entry name" value="Glutaredoxin"/>
    <property type="match status" value="1"/>
</dbReference>
<dbReference type="InterPro" id="IPR012336">
    <property type="entry name" value="Thioredoxin-like_fold"/>
</dbReference>
<dbReference type="InterPro" id="IPR036249">
    <property type="entry name" value="Thioredoxin-like_sf"/>
</dbReference>
<dbReference type="InterPro" id="IPR017937">
    <property type="entry name" value="Thioredoxin_CS"/>
</dbReference>
<dbReference type="InterPro" id="IPR013766">
    <property type="entry name" value="Thioredoxin_domain"/>
</dbReference>
<dbReference type="PANTHER" id="PTHR13887:SF14">
    <property type="entry name" value="DISULFIDE BOND FORMATION PROTEIN D"/>
    <property type="match status" value="1"/>
</dbReference>
<dbReference type="PANTHER" id="PTHR13887">
    <property type="entry name" value="GLUTATHIONE S-TRANSFERASE KAPPA"/>
    <property type="match status" value="1"/>
</dbReference>
<dbReference type="Pfam" id="PF13462">
    <property type="entry name" value="Thioredoxin_4"/>
    <property type="match status" value="1"/>
</dbReference>
<dbReference type="SUPFAM" id="SSF52833">
    <property type="entry name" value="Thioredoxin-like"/>
    <property type="match status" value="1"/>
</dbReference>
<dbReference type="PROSITE" id="PS00194">
    <property type="entry name" value="THIOREDOXIN_1"/>
    <property type="match status" value="1"/>
</dbReference>
<dbReference type="PROSITE" id="PS51352">
    <property type="entry name" value="THIOREDOXIN_2"/>
    <property type="match status" value="1"/>
</dbReference>
<gene>
    <name type="ordered locus">RP025</name>
</gene>
<proteinExistence type="inferred from homology"/>